<organism>
    <name type="scientific">Paracoccus denitrificans</name>
    <dbReference type="NCBI Taxonomy" id="266"/>
    <lineage>
        <taxon>Bacteria</taxon>
        <taxon>Pseudomonadati</taxon>
        <taxon>Pseudomonadota</taxon>
        <taxon>Alphaproteobacteria</taxon>
        <taxon>Rhodobacterales</taxon>
        <taxon>Paracoccaceae</taxon>
        <taxon>Paracoccus</taxon>
    </lineage>
</organism>
<name>MOXX_PARDE</name>
<accession>P29904</accession>
<proteinExistence type="predicted"/>
<reference key="1">
    <citation type="journal article" date="1993" name="Mol. Microbiol.">
        <title>Identification of a two-component regulatory system controlling methanol dehydrogenase synthesis in Paracoccus denitrificans.</title>
        <authorList>
            <person name="Harms N."/>
            <person name="Reijnders W.N."/>
            <person name="Anazawa H."/>
            <person name="de Palen C.J."/>
            <person name="van Spanning R.J.M."/>
            <person name="Oltmann L.F."/>
            <person name="Stouthamer A.H."/>
        </authorList>
    </citation>
    <scope>NUCLEOTIDE SEQUENCE [GENOMIC DNA]</scope>
</reference>
<keyword id="KW-0963">Cytoplasm</keyword>
<keyword id="KW-0238">DNA-binding</keyword>
<keyword id="KW-0485">Methanol utilization</keyword>
<keyword id="KW-0597">Phosphoprotein</keyword>
<keyword id="KW-0804">Transcription</keyword>
<keyword id="KW-0805">Transcription regulation</keyword>
<keyword id="KW-0902">Two-component regulatory system</keyword>
<dbReference type="EMBL" id="M92421">
    <property type="protein sequence ID" value="AAC36998.1"/>
    <property type="molecule type" value="Unassigned_DNA"/>
</dbReference>
<dbReference type="PIR" id="S32872">
    <property type="entry name" value="S32872"/>
</dbReference>
<dbReference type="RefSeq" id="WP_011749262.1">
    <property type="nucleotide sequence ID" value="NZ_JAOSHR010000012.1"/>
</dbReference>
<dbReference type="SMR" id="P29904"/>
<dbReference type="OMA" id="AFLPKEC"/>
<dbReference type="GO" id="GO:0005737">
    <property type="term" value="C:cytoplasm"/>
    <property type="evidence" value="ECO:0007669"/>
    <property type="project" value="UniProtKB-SubCell"/>
</dbReference>
<dbReference type="GO" id="GO:0003677">
    <property type="term" value="F:DNA binding"/>
    <property type="evidence" value="ECO:0007669"/>
    <property type="project" value="UniProtKB-KW"/>
</dbReference>
<dbReference type="GO" id="GO:0015945">
    <property type="term" value="P:methanol metabolic process"/>
    <property type="evidence" value="ECO:0007669"/>
    <property type="project" value="UniProtKB-KW"/>
</dbReference>
<dbReference type="GO" id="GO:0000160">
    <property type="term" value="P:phosphorelay signal transduction system"/>
    <property type="evidence" value="ECO:0007669"/>
    <property type="project" value="UniProtKB-KW"/>
</dbReference>
<dbReference type="GO" id="GO:0006355">
    <property type="term" value="P:regulation of DNA-templated transcription"/>
    <property type="evidence" value="ECO:0007669"/>
    <property type="project" value="InterPro"/>
</dbReference>
<dbReference type="CDD" id="cd06170">
    <property type="entry name" value="LuxR_C_like"/>
    <property type="match status" value="1"/>
</dbReference>
<dbReference type="CDD" id="cd17535">
    <property type="entry name" value="REC_NarL-like"/>
    <property type="match status" value="1"/>
</dbReference>
<dbReference type="Gene3D" id="3.40.50.2300">
    <property type="match status" value="1"/>
</dbReference>
<dbReference type="Gene3D" id="1.10.10.10">
    <property type="entry name" value="Winged helix-like DNA-binding domain superfamily/Winged helix DNA-binding domain"/>
    <property type="match status" value="1"/>
</dbReference>
<dbReference type="InterPro" id="IPR011006">
    <property type="entry name" value="CheY-like_superfamily"/>
</dbReference>
<dbReference type="InterPro" id="IPR016032">
    <property type="entry name" value="Sig_transdc_resp-reg_C-effctor"/>
</dbReference>
<dbReference type="InterPro" id="IPR001789">
    <property type="entry name" value="Sig_transdc_resp-reg_receiver"/>
</dbReference>
<dbReference type="InterPro" id="IPR000792">
    <property type="entry name" value="Tscrpt_reg_LuxR_C"/>
</dbReference>
<dbReference type="InterPro" id="IPR039420">
    <property type="entry name" value="WalR-like"/>
</dbReference>
<dbReference type="InterPro" id="IPR036388">
    <property type="entry name" value="WH-like_DNA-bd_sf"/>
</dbReference>
<dbReference type="PANTHER" id="PTHR43214">
    <property type="entry name" value="TWO-COMPONENT RESPONSE REGULATOR"/>
    <property type="match status" value="1"/>
</dbReference>
<dbReference type="PANTHER" id="PTHR43214:SF43">
    <property type="entry name" value="TWO-COMPONENT RESPONSE REGULATOR"/>
    <property type="match status" value="1"/>
</dbReference>
<dbReference type="Pfam" id="PF00196">
    <property type="entry name" value="GerE"/>
    <property type="match status" value="1"/>
</dbReference>
<dbReference type="Pfam" id="PF00072">
    <property type="entry name" value="Response_reg"/>
    <property type="match status" value="1"/>
</dbReference>
<dbReference type="PRINTS" id="PR00038">
    <property type="entry name" value="HTHLUXR"/>
</dbReference>
<dbReference type="SMART" id="SM00421">
    <property type="entry name" value="HTH_LUXR"/>
    <property type="match status" value="1"/>
</dbReference>
<dbReference type="SMART" id="SM00448">
    <property type="entry name" value="REC"/>
    <property type="match status" value="1"/>
</dbReference>
<dbReference type="SUPFAM" id="SSF46894">
    <property type="entry name" value="C-terminal effector domain of the bipartite response regulators"/>
    <property type="match status" value="1"/>
</dbReference>
<dbReference type="SUPFAM" id="SSF52172">
    <property type="entry name" value="CheY-like"/>
    <property type="match status" value="1"/>
</dbReference>
<dbReference type="PROSITE" id="PS50043">
    <property type="entry name" value="HTH_LUXR_2"/>
    <property type="match status" value="1"/>
</dbReference>
<dbReference type="PROSITE" id="PS50110">
    <property type="entry name" value="RESPONSE_REGULATORY"/>
    <property type="match status" value="1"/>
</dbReference>
<sequence length="223" mass="24450">MQAALKLQSDDARPLQILIVDDHPVVAEGWGRIIRTKTACEIASAPSASEGWRAWRQARPDLMVVDLSIGRNKIAGIRLIERLRRVDPDLPILVFTMHRSPVLARRALMFGANGIINKDSPPAEICAAFTEVARGGNYVDSRLAMQIALLNVSRPGTSAPRLTGREEEILGMITEGMSYRDIADRACISYKTVSNVSLVLKDKLGAANLADLVVKGIRYFEGD</sequence>
<protein>
    <recommendedName>
        <fullName>Methanol utilization control regulatory protein MoxX</fullName>
    </recommendedName>
</protein>
<gene>
    <name type="primary">moxX</name>
</gene>
<comment type="function">
    <text>Member of the two-component regulatory system MoxY/MoxX probably involved in the regulation of the methanol dehydrogenase expression.</text>
</comment>
<comment type="subcellular location">
    <subcellularLocation>
        <location evidence="3">Cytoplasm</location>
    </subcellularLocation>
</comment>
<comment type="PTM">
    <text evidence="3">Phosphorylated by MoxY.</text>
</comment>
<feature type="chain" id="PRO_0000081139" description="Methanol utilization control regulatory protein MoxX">
    <location>
        <begin position="1"/>
        <end position="223"/>
    </location>
</feature>
<feature type="domain" description="Response regulatory" evidence="1">
    <location>
        <begin position="16"/>
        <end position="133"/>
    </location>
</feature>
<feature type="domain" description="HTH luxR-type" evidence="2">
    <location>
        <begin position="155"/>
        <end position="220"/>
    </location>
</feature>
<feature type="DNA-binding region" description="H-T-H motif" evidence="2">
    <location>
        <begin position="179"/>
        <end position="198"/>
    </location>
</feature>
<evidence type="ECO:0000255" key="1">
    <source>
        <dbReference type="PROSITE-ProRule" id="PRU00169"/>
    </source>
</evidence>
<evidence type="ECO:0000255" key="2">
    <source>
        <dbReference type="PROSITE-ProRule" id="PRU00411"/>
    </source>
</evidence>
<evidence type="ECO:0000305" key="3"/>